<protein>
    <recommendedName>
        <fullName>DNA nucleotidylexotransferase</fullName>
        <ecNumber evidence="8 9 10">2.7.7.31</ecNumber>
        <ecNumber evidence="8">3.1.11.-</ecNumber>
    </recommendedName>
    <alternativeName>
        <fullName>Terminal addition enzyme</fullName>
    </alternativeName>
    <alternativeName>
        <fullName evidence="15">Terminal deoxynucleotidyltransferase</fullName>
        <shortName>TDT</shortName>
        <shortName>Terminal transferase</shortName>
    </alternativeName>
</protein>
<name>TDT_MOUSE</name>
<dbReference type="EC" id="2.7.7.31" evidence="8 9 10"/>
<dbReference type="EC" id="3.1.11.-" evidence="8"/>
<dbReference type="EMBL" id="X04123">
    <property type="protein sequence ID" value="CAA27735.1"/>
    <property type="molecule type" value="mRNA"/>
</dbReference>
<dbReference type="EMBL" id="X68670">
    <property type="protein sequence ID" value="CAA48634.2"/>
    <property type="molecule type" value="mRNA"/>
</dbReference>
<dbReference type="EMBL" id="AF316014">
    <property type="protein sequence ID" value="AAK07884.1"/>
    <property type="molecule type" value="mRNA"/>
</dbReference>
<dbReference type="EMBL" id="AF316015">
    <property type="protein sequence ID" value="AAK07885.1"/>
    <property type="molecule type" value="mRNA"/>
</dbReference>
<dbReference type="EMBL" id="AK087978">
    <property type="protein sequence ID" value="BAC40071.1"/>
    <property type="molecule type" value="mRNA"/>
</dbReference>
<dbReference type="EMBL" id="AK088709">
    <property type="protein sequence ID" value="BAC40518.1"/>
    <property type="molecule type" value="mRNA"/>
</dbReference>
<dbReference type="CCDS" id="CCDS29807.1">
    <molecule id="P09838-1"/>
</dbReference>
<dbReference type="CCDS" id="CCDS37984.1">
    <molecule id="P09838-2"/>
</dbReference>
<dbReference type="PIR" id="B23595">
    <property type="entry name" value="B23595"/>
</dbReference>
<dbReference type="RefSeq" id="NP_001036693.1">
    <molecule id="P09838-2"/>
    <property type="nucleotide sequence ID" value="NM_001043228.1"/>
</dbReference>
<dbReference type="RefSeq" id="NP_033371.2">
    <molecule id="P09838-1"/>
    <property type="nucleotide sequence ID" value="NM_009345.2"/>
</dbReference>
<dbReference type="PDB" id="1JMS">
    <property type="method" value="X-ray"/>
    <property type="resolution" value="2.36 A"/>
    <property type="chains" value="A=130-510"/>
</dbReference>
<dbReference type="PDB" id="1KDH">
    <property type="method" value="X-ray"/>
    <property type="resolution" value="3.00 A"/>
    <property type="chains" value="A=148-510"/>
</dbReference>
<dbReference type="PDB" id="1KEJ">
    <property type="method" value="X-ray"/>
    <property type="resolution" value="3.00 A"/>
    <property type="chains" value="A=148-510"/>
</dbReference>
<dbReference type="PDB" id="4I27">
    <property type="method" value="X-ray"/>
    <property type="resolution" value="2.60 A"/>
    <property type="chains" value="A=132-510"/>
</dbReference>
<dbReference type="PDB" id="4I28">
    <property type="method" value="X-ray"/>
    <property type="resolution" value="2.15 A"/>
    <property type="chains" value="A=132-510"/>
</dbReference>
<dbReference type="PDB" id="4I29">
    <property type="method" value="X-ray"/>
    <property type="resolution" value="2.20 A"/>
    <property type="chains" value="A=132-510"/>
</dbReference>
<dbReference type="PDB" id="4I2A">
    <property type="method" value="X-ray"/>
    <property type="resolution" value="1.90 A"/>
    <property type="chains" value="A=132-510"/>
</dbReference>
<dbReference type="PDB" id="4I2B">
    <property type="method" value="X-ray"/>
    <property type="resolution" value="2.20 A"/>
    <property type="chains" value="A=132-510"/>
</dbReference>
<dbReference type="PDB" id="4I2C">
    <property type="method" value="X-ray"/>
    <property type="resolution" value="2.10 A"/>
    <property type="chains" value="A=132-510"/>
</dbReference>
<dbReference type="PDB" id="4I2D">
    <property type="method" value="X-ray"/>
    <property type="resolution" value="2.30 A"/>
    <property type="chains" value="A=132-510"/>
</dbReference>
<dbReference type="PDB" id="4I2E">
    <property type="method" value="X-ray"/>
    <property type="resolution" value="2.00 A"/>
    <property type="chains" value="A=132-510"/>
</dbReference>
<dbReference type="PDB" id="4I2F">
    <property type="method" value="X-ray"/>
    <property type="resolution" value="2.10 A"/>
    <property type="chains" value="A=132-510"/>
</dbReference>
<dbReference type="PDB" id="4I2G">
    <property type="method" value="X-ray"/>
    <property type="resolution" value="2.50 A"/>
    <property type="chains" value="A=132-510"/>
</dbReference>
<dbReference type="PDB" id="4I2H">
    <property type="method" value="X-ray"/>
    <property type="resolution" value="2.75 A"/>
    <property type="chains" value="A=132-510"/>
</dbReference>
<dbReference type="PDB" id="4I2I">
    <property type="method" value="X-ray"/>
    <property type="resolution" value="2.50 A"/>
    <property type="chains" value="A=132-510"/>
</dbReference>
<dbReference type="PDB" id="4I2J">
    <property type="method" value="X-ray"/>
    <property type="resolution" value="2.70 A"/>
    <property type="chains" value="A=132-510"/>
</dbReference>
<dbReference type="PDB" id="4IQT">
    <property type="method" value="X-ray"/>
    <property type="resolution" value="2.60 A"/>
    <property type="chains" value="A=132-510"/>
</dbReference>
<dbReference type="PDB" id="4IQU">
    <property type="method" value="X-ray"/>
    <property type="resolution" value="2.40 A"/>
    <property type="chains" value="A=132-510"/>
</dbReference>
<dbReference type="PDB" id="4IQV">
    <property type="method" value="X-ray"/>
    <property type="resolution" value="2.90 A"/>
    <property type="chains" value="A=132-510"/>
</dbReference>
<dbReference type="PDB" id="4IQW">
    <property type="method" value="X-ray"/>
    <property type="resolution" value="2.60 A"/>
    <property type="chains" value="A=132-510"/>
</dbReference>
<dbReference type="PDB" id="4QZ8">
    <property type="method" value="X-ray"/>
    <property type="resolution" value="2.70 A"/>
    <property type="chains" value="A=132-510"/>
</dbReference>
<dbReference type="PDB" id="4QZ9">
    <property type="method" value="X-ray"/>
    <property type="resolution" value="2.05 A"/>
    <property type="chains" value="A=132-510"/>
</dbReference>
<dbReference type="PDB" id="4QZA">
    <property type="method" value="X-ray"/>
    <property type="resolution" value="2.15 A"/>
    <property type="chains" value="A=132-510"/>
</dbReference>
<dbReference type="PDB" id="4QZB">
    <property type="method" value="X-ray"/>
    <property type="resolution" value="2.15 A"/>
    <property type="chains" value="A=132-510"/>
</dbReference>
<dbReference type="PDB" id="4QZC">
    <property type="method" value="X-ray"/>
    <property type="resolution" value="2.75 A"/>
    <property type="chains" value="A=132-510"/>
</dbReference>
<dbReference type="PDB" id="4QZD">
    <property type="method" value="X-ray"/>
    <property type="resolution" value="2.70 A"/>
    <property type="chains" value="A=132-510"/>
</dbReference>
<dbReference type="PDB" id="4QZE">
    <property type="method" value="X-ray"/>
    <property type="resolution" value="2.25 A"/>
    <property type="chains" value="A=132-510"/>
</dbReference>
<dbReference type="PDB" id="4QZF">
    <property type="method" value="X-ray"/>
    <property type="resolution" value="2.60 A"/>
    <property type="chains" value="A=132-510"/>
</dbReference>
<dbReference type="PDB" id="4QZG">
    <property type="method" value="X-ray"/>
    <property type="resolution" value="2.75 A"/>
    <property type="chains" value="A=132-510"/>
</dbReference>
<dbReference type="PDB" id="4QZH">
    <property type="method" value="X-ray"/>
    <property type="resolution" value="2.60 A"/>
    <property type="chains" value="A=132-510"/>
</dbReference>
<dbReference type="PDB" id="4QZI">
    <property type="method" value="X-ray"/>
    <property type="resolution" value="2.65 A"/>
    <property type="chains" value="A=132-510"/>
</dbReference>
<dbReference type="PDB" id="5D46">
    <property type="method" value="X-ray"/>
    <property type="resolution" value="2.80 A"/>
    <property type="chains" value="A=132-510"/>
</dbReference>
<dbReference type="PDB" id="5D49">
    <property type="method" value="X-ray"/>
    <property type="resolution" value="1.99 A"/>
    <property type="chains" value="A=132-510"/>
</dbReference>
<dbReference type="PDB" id="5D4B">
    <property type="method" value="X-ray"/>
    <property type="resolution" value="2.66 A"/>
    <property type="chains" value="A/B=132-510"/>
</dbReference>
<dbReference type="PDB" id="6GO3">
    <property type="method" value="X-ray"/>
    <property type="resolution" value="2.20 A"/>
    <property type="chains" value="A=132-377, A=409-510"/>
</dbReference>
<dbReference type="PDB" id="6GO4">
    <property type="method" value="X-ray"/>
    <property type="resolution" value="1.96 A"/>
    <property type="chains" value="A=132-377, A=409-510"/>
</dbReference>
<dbReference type="PDB" id="6GO5">
    <property type="method" value="X-ray"/>
    <property type="resolution" value="2.35 A"/>
    <property type="chains" value="A/B=132-377, A/B=409-510"/>
</dbReference>
<dbReference type="PDB" id="6GO6">
    <property type="method" value="X-ray"/>
    <property type="resolution" value="2.09 A"/>
    <property type="chains" value="A=132-377, A=409-510"/>
</dbReference>
<dbReference type="PDB" id="6GO7">
    <property type="method" value="X-ray"/>
    <property type="resolution" value="2.55 A"/>
    <property type="chains" value="A=132-377, A=409-510"/>
</dbReference>
<dbReference type="PDBsum" id="1JMS"/>
<dbReference type="PDBsum" id="1KDH"/>
<dbReference type="PDBsum" id="1KEJ"/>
<dbReference type="PDBsum" id="4I27"/>
<dbReference type="PDBsum" id="4I28"/>
<dbReference type="PDBsum" id="4I29"/>
<dbReference type="PDBsum" id="4I2A"/>
<dbReference type="PDBsum" id="4I2B"/>
<dbReference type="PDBsum" id="4I2C"/>
<dbReference type="PDBsum" id="4I2D"/>
<dbReference type="PDBsum" id="4I2E"/>
<dbReference type="PDBsum" id="4I2F"/>
<dbReference type="PDBsum" id="4I2G"/>
<dbReference type="PDBsum" id="4I2H"/>
<dbReference type="PDBsum" id="4I2I"/>
<dbReference type="PDBsum" id="4I2J"/>
<dbReference type="PDBsum" id="4IQT"/>
<dbReference type="PDBsum" id="4IQU"/>
<dbReference type="PDBsum" id="4IQV"/>
<dbReference type="PDBsum" id="4IQW"/>
<dbReference type="PDBsum" id="4QZ8"/>
<dbReference type="PDBsum" id="4QZ9"/>
<dbReference type="PDBsum" id="4QZA"/>
<dbReference type="PDBsum" id="4QZB"/>
<dbReference type="PDBsum" id="4QZC"/>
<dbReference type="PDBsum" id="4QZD"/>
<dbReference type="PDBsum" id="4QZE"/>
<dbReference type="PDBsum" id="4QZF"/>
<dbReference type="PDBsum" id="4QZG"/>
<dbReference type="PDBsum" id="4QZH"/>
<dbReference type="PDBsum" id="4QZI"/>
<dbReference type="PDBsum" id="5D46"/>
<dbReference type="PDBsum" id="5D49"/>
<dbReference type="PDBsum" id="5D4B"/>
<dbReference type="PDBsum" id="6GO3"/>
<dbReference type="PDBsum" id="6GO4"/>
<dbReference type="PDBsum" id="6GO5"/>
<dbReference type="PDBsum" id="6GO6"/>
<dbReference type="PDBsum" id="6GO7"/>
<dbReference type="SMR" id="P09838"/>
<dbReference type="BioGRID" id="204095">
    <property type="interactions" value="4"/>
</dbReference>
<dbReference type="FunCoup" id="P09838">
    <property type="interactions" value="256"/>
</dbReference>
<dbReference type="STRING" id="10090.ENSMUSP00000062078"/>
<dbReference type="iPTMnet" id="P09838"/>
<dbReference type="PhosphoSitePlus" id="P09838"/>
<dbReference type="jPOST" id="P09838"/>
<dbReference type="PaxDb" id="10090-ENSMUSP00000062078"/>
<dbReference type="ProteomicsDB" id="263150">
    <molecule id="P09838-2"/>
</dbReference>
<dbReference type="ProteomicsDB" id="263151">
    <molecule id="P09838-2"/>
</dbReference>
<dbReference type="Antibodypedia" id="16924">
    <property type="antibodies" value="640 antibodies from 43 providers"/>
</dbReference>
<dbReference type="DNASU" id="21673"/>
<dbReference type="Ensembl" id="ENSMUST00000051806.12">
    <molecule id="P09838-1"/>
    <property type="protein sequence ID" value="ENSMUSP00000062078.5"/>
    <property type="gene ID" value="ENSMUSG00000025014.14"/>
</dbReference>
<dbReference type="Ensembl" id="ENSMUST00000112200.3">
    <molecule id="P09838-2"/>
    <property type="protein sequence ID" value="ENSMUSP00000107819.2"/>
    <property type="gene ID" value="ENSMUSG00000025014.14"/>
</dbReference>
<dbReference type="GeneID" id="21673"/>
<dbReference type="KEGG" id="mmu:21673"/>
<dbReference type="UCSC" id="uc008hlo.1">
    <molecule id="P09838-2"/>
    <property type="organism name" value="mouse"/>
</dbReference>
<dbReference type="AGR" id="MGI:98659"/>
<dbReference type="CTD" id="1791"/>
<dbReference type="MGI" id="MGI:98659">
    <property type="gene designation" value="Dntt"/>
</dbReference>
<dbReference type="VEuPathDB" id="HostDB:ENSMUSG00000025014"/>
<dbReference type="eggNOG" id="KOG2534">
    <property type="taxonomic scope" value="Eukaryota"/>
</dbReference>
<dbReference type="GeneTree" id="ENSGT00940000158584"/>
<dbReference type="HOGENOM" id="CLU_008698_0_0_1"/>
<dbReference type="InParanoid" id="P09838"/>
<dbReference type="OMA" id="PKVINLW"/>
<dbReference type="OrthoDB" id="29440at9989"/>
<dbReference type="PhylomeDB" id="P09838"/>
<dbReference type="TreeFam" id="TF103012"/>
<dbReference type="BRENDA" id="2.7.7.31">
    <property type="organism ID" value="3474"/>
</dbReference>
<dbReference type="BioGRID-ORCS" id="21673">
    <property type="hits" value="7 hits in 78 CRISPR screens"/>
</dbReference>
<dbReference type="ChiTaRS" id="Dntt">
    <property type="organism name" value="mouse"/>
</dbReference>
<dbReference type="EvolutionaryTrace" id="P09838"/>
<dbReference type="PRO" id="PR:P09838"/>
<dbReference type="Proteomes" id="UP000000589">
    <property type="component" value="Chromosome 19"/>
</dbReference>
<dbReference type="RNAct" id="P09838">
    <property type="molecule type" value="protein"/>
</dbReference>
<dbReference type="Bgee" id="ENSMUSG00000025014">
    <property type="expression patterns" value="Expressed in thymus and 25 other cell types or tissues"/>
</dbReference>
<dbReference type="ExpressionAtlas" id="P09838">
    <property type="expression patterns" value="baseline and differential"/>
</dbReference>
<dbReference type="GO" id="GO:0005829">
    <property type="term" value="C:cytosol"/>
    <property type="evidence" value="ECO:0007669"/>
    <property type="project" value="Ensembl"/>
</dbReference>
<dbReference type="GO" id="GO:0000791">
    <property type="term" value="C:euchromatin"/>
    <property type="evidence" value="ECO:0007669"/>
    <property type="project" value="Ensembl"/>
</dbReference>
<dbReference type="GO" id="GO:0016363">
    <property type="term" value="C:nuclear matrix"/>
    <property type="evidence" value="ECO:0007669"/>
    <property type="project" value="Ensembl"/>
</dbReference>
<dbReference type="GO" id="GO:0005654">
    <property type="term" value="C:nucleoplasm"/>
    <property type="evidence" value="ECO:0007669"/>
    <property type="project" value="Ensembl"/>
</dbReference>
<dbReference type="GO" id="GO:0005634">
    <property type="term" value="C:nucleus"/>
    <property type="evidence" value="ECO:0000250"/>
    <property type="project" value="UniProtKB"/>
</dbReference>
<dbReference type="GO" id="GO:0003677">
    <property type="term" value="F:DNA binding"/>
    <property type="evidence" value="ECO:0007669"/>
    <property type="project" value="InterPro"/>
</dbReference>
<dbReference type="GO" id="GO:0003912">
    <property type="term" value="F:DNA nucleotidylexotransferase activity"/>
    <property type="evidence" value="ECO:0000314"/>
    <property type="project" value="MGI"/>
</dbReference>
<dbReference type="GO" id="GO:0003887">
    <property type="term" value="F:DNA-directed DNA polymerase activity"/>
    <property type="evidence" value="ECO:0007669"/>
    <property type="project" value="InterPro"/>
</dbReference>
<dbReference type="GO" id="GO:0016787">
    <property type="term" value="F:hydrolase activity"/>
    <property type="evidence" value="ECO:0007669"/>
    <property type="project" value="UniProtKB-KW"/>
</dbReference>
<dbReference type="GO" id="GO:0046872">
    <property type="term" value="F:metal ion binding"/>
    <property type="evidence" value="ECO:0007669"/>
    <property type="project" value="UniProtKB-KW"/>
</dbReference>
<dbReference type="GO" id="GO:0006259">
    <property type="term" value="P:DNA metabolic process"/>
    <property type="evidence" value="ECO:0000314"/>
    <property type="project" value="MGI"/>
</dbReference>
<dbReference type="GO" id="GO:0006304">
    <property type="term" value="P:DNA modification"/>
    <property type="evidence" value="ECO:0007669"/>
    <property type="project" value="UniProtKB-KW"/>
</dbReference>
<dbReference type="GO" id="GO:0006281">
    <property type="term" value="P:DNA repair"/>
    <property type="evidence" value="ECO:0007669"/>
    <property type="project" value="InterPro"/>
</dbReference>
<dbReference type="GO" id="GO:0033198">
    <property type="term" value="P:response to ATP"/>
    <property type="evidence" value="ECO:0007669"/>
    <property type="project" value="Ensembl"/>
</dbReference>
<dbReference type="CDD" id="cd00141">
    <property type="entry name" value="NT_POLXc"/>
    <property type="match status" value="1"/>
</dbReference>
<dbReference type="FunFam" id="3.30.210.10:FF:000003">
    <property type="entry name" value="DNA nucleotidylexotransferase"/>
    <property type="match status" value="1"/>
</dbReference>
<dbReference type="FunFam" id="3.30.460.10:FF:000028">
    <property type="entry name" value="DNA nucleotidylexotransferase"/>
    <property type="match status" value="1"/>
</dbReference>
<dbReference type="FunFam" id="3.40.50.10190:FF:000041">
    <property type="entry name" value="DNA nucleotidylexotransferase"/>
    <property type="match status" value="1"/>
</dbReference>
<dbReference type="FunFam" id="1.10.150.20:FF:000010">
    <property type="entry name" value="DNA polymerase lambda"/>
    <property type="match status" value="1"/>
</dbReference>
<dbReference type="FunFam" id="1.10.150.110:FF:000003">
    <property type="entry name" value="DNA polymerase mu"/>
    <property type="match status" value="1"/>
</dbReference>
<dbReference type="Gene3D" id="1.10.150.20">
    <property type="entry name" value="5' to 3' exonuclease, C-terminal subdomain"/>
    <property type="match status" value="1"/>
</dbReference>
<dbReference type="Gene3D" id="3.30.460.10">
    <property type="entry name" value="Beta Polymerase, domain 2"/>
    <property type="match status" value="1"/>
</dbReference>
<dbReference type="Gene3D" id="3.40.50.10190">
    <property type="entry name" value="BRCT domain"/>
    <property type="match status" value="1"/>
</dbReference>
<dbReference type="Gene3D" id="1.10.150.110">
    <property type="entry name" value="DNA polymerase beta, N-terminal domain-like"/>
    <property type="match status" value="1"/>
</dbReference>
<dbReference type="Gene3D" id="3.30.210.10">
    <property type="entry name" value="DNA polymerase, thumb domain"/>
    <property type="match status" value="1"/>
</dbReference>
<dbReference type="InterPro" id="IPR001357">
    <property type="entry name" value="BRCT_dom"/>
</dbReference>
<dbReference type="InterPro" id="IPR036420">
    <property type="entry name" value="BRCT_dom_sf"/>
</dbReference>
<dbReference type="InterPro" id="IPR002054">
    <property type="entry name" value="DNA-dir_DNA_pol_X"/>
</dbReference>
<dbReference type="InterPro" id="IPR019843">
    <property type="entry name" value="DNA_pol-X_BS"/>
</dbReference>
<dbReference type="InterPro" id="IPR010996">
    <property type="entry name" value="DNA_pol_b-like_N"/>
</dbReference>
<dbReference type="InterPro" id="IPR018944">
    <property type="entry name" value="DNA_pol_lambd_fingers_domain"/>
</dbReference>
<dbReference type="InterPro" id="IPR027421">
    <property type="entry name" value="DNA_pol_lamdba_lyase_dom_sf"/>
</dbReference>
<dbReference type="InterPro" id="IPR037160">
    <property type="entry name" value="DNA_Pol_thumb_sf"/>
</dbReference>
<dbReference type="InterPro" id="IPR022312">
    <property type="entry name" value="DNA_pol_X"/>
</dbReference>
<dbReference type="InterPro" id="IPR043519">
    <property type="entry name" value="NT_sf"/>
</dbReference>
<dbReference type="InterPro" id="IPR029398">
    <property type="entry name" value="PolB_thumb"/>
</dbReference>
<dbReference type="InterPro" id="IPR002934">
    <property type="entry name" value="Polymerase_NTP_transf_dom"/>
</dbReference>
<dbReference type="InterPro" id="IPR027292">
    <property type="entry name" value="TdT"/>
</dbReference>
<dbReference type="InterPro" id="IPR001726">
    <property type="entry name" value="TdT/Mu"/>
</dbReference>
<dbReference type="PANTHER" id="PTHR11276:SF21">
    <property type="entry name" value="DNA NUCLEOTIDYLEXOTRANSFERASE"/>
    <property type="match status" value="1"/>
</dbReference>
<dbReference type="PANTHER" id="PTHR11276">
    <property type="entry name" value="DNA POLYMERASE TYPE-X FAMILY MEMBER"/>
    <property type="match status" value="1"/>
</dbReference>
<dbReference type="Pfam" id="PF00533">
    <property type="entry name" value="BRCT"/>
    <property type="match status" value="1"/>
</dbReference>
<dbReference type="Pfam" id="PF14791">
    <property type="entry name" value="DNA_pol_B_thumb"/>
    <property type="match status" value="1"/>
</dbReference>
<dbReference type="Pfam" id="PF10391">
    <property type="entry name" value="DNA_pol_lambd_f"/>
    <property type="match status" value="1"/>
</dbReference>
<dbReference type="Pfam" id="PF14716">
    <property type="entry name" value="HHH_8"/>
    <property type="match status" value="1"/>
</dbReference>
<dbReference type="Pfam" id="PF01909">
    <property type="entry name" value="NTP_transf_2"/>
    <property type="match status" value="1"/>
</dbReference>
<dbReference type="PIRSF" id="PIRSF000817">
    <property type="entry name" value="DNA_NT"/>
    <property type="match status" value="1"/>
</dbReference>
<dbReference type="PIRSF" id="PIRSF501175">
    <property type="entry name" value="TDT"/>
    <property type="match status" value="1"/>
</dbReference>
<dbReference type="PRINTS" id="PR00869">
    <property type="entry name" value="DNAPOLX"/>
</dbReference>
<dbReference type="PRINTS" id="PR00871">
    <property type="entry name" value="DNAPOLXTDT"/>
</dbReference>
<dbReference type="SMART" id="SM00292">
    <property type="entry name" value="BRCT"/>
    <property type="match status" value="1"/>
</dbReference>
<dbReference type="SMART" id="SM00483">
    <property type="entry name" value="POLXc"/>
    <property type="match status" value="1"/>
</dbReference>
<dbReference type="SUPFAM" id="SSF52113">
    <property type="entry name" value="BRCT domain"/>
    <property type="match status" value="1"/>
</dbReference>
<dbReference type="SUPFAM" id="SSF47802">
    <property type="entry name" value="DNA polymerase beta, N-terminal domain-like"/>
    <property type="match status" value="1"/>
</dbReference>
<dbReference type="SUPFAM" id="SSF81301">
    <property type="entry name" value="Nucleotidyltransferase"/>
    <property type="match status" value="1"/>
</dbReference>
<dbReference type="SUPFAM" id="SSF81585">
    <property type="entry name" value="PsbU/PolX domain-like"/>
    <property type="match status" value="1"/>
</dbReference>
<dbReference type="PROSITE" id="PS50172">
    <property type="entry name" value="BRCT"/>
    <property type="match status" value="1"/>
</dbReference>
<dbReference type="PROSITE" id="PS00522">
    <property type="entry name" value="DNA_POLYMERASE_X"/>
    <property type="match status" value="1"/>
</dbReference>
<organism>
    <name type="scientific">Mus musculus</name>
    <name type="common">Mouse</name>
    <dbReference type="NCBI Taxonomy" id="10090"/>
    <lineage>
        <taxon>Eukaryota</taxon>
        <taxon>Metazoa</taxon>
        <taxon>Chordata</taxon>
        <taxon>Craniata</taxon>
        <taxon>Vertebrata</taxon>
        <taxon>Euteleostomi</taxon>
        <taxon>Mammalia</taxon>
        <taxon>Eutheria</taxon>
        <taxon>Euarchontoglires</taxon>
        <taxon>Glires</taxon>
        <taxon>Rodentia</taxon>
        <taxon>Myomorpha</taxon>
        <taxon>Muroidea</taxon>
        <taxon>Muridae</taxon>
        <taxon>Murinae</taxon>
        <taxon>Mus</taxon>
        <taxon>Mus</taxon>
    </lineage>
</organism>
<accession>P09838</accession>
<accession>Q99PD0</accession>
<accession>Q99PD1</accession>
<reference key="1">
    <citation type="journal article" date="1986" name="Nucleic Acids Res.">
        <title>Isolation and characterization of bovine and mouse terminal deoxynucleotidyltransferase cDNAs expressible in mammalian cells.</title>
        <authorList>
            <person name="Koiwai O."/>
            <person name="Yokota T."/>
            <person name="Kageyama T."/>
            <person name="Hirose T."/>
            <person name="Yoshida S."/>
            <person name="Arai K."/>
        </authorList>
    </citation>
    <scope>NUCLEOTIDE SEQUENCE [MRNA] (ISOFORM TDT-L)</scope>
    <source>
        <tissue>Lymphoma</tissue>
    </source>
</reference>
<reference key="2">
    <citation type="journal article" date="1993" name="Nucleic Acids Res.">
        <title>Differential splicing in mouse thymus generates two forms of terminal deoxynucleotidyl transferase.</title>
        <authorList>
            <person name="Doyen N."/>
            <person name="Fanton D'Andon M."/>
            <person name="Bentolila L.A."/>
            <person name="Nguyen T.Q."/>
            <person name="Rougeon F."/>
        </authorList>
    </citation>
    <scope>NUCLEOTIDE SEQUENCE [MRNA] (ISOFORM TDT-S)</scope>
    <scope>FUNCTION</scope>
    <scope>ALTERNATIVE SPLICING</scope>
    <scope>TISSUE SPECIFICITY</scope>
    <source>
        <strain>BALB/cJ</strain>
        <tissue>Thymus</tissue>
    </source>
</reference>
<reference key="3">
    <citation type="submission" date="2002-11" db="EMBL/GenBank/DDBJ databases">
        <authorList>
            <person name="Doyen N."/>
        </authorList>
    </citation>
    <scope>SEQUENCE REVISION TO 443-445</scope>
</reference>
<reference key="4">
    <citation type="journal article" date="2001" name="J. Exp. Med.">
        <title>The long isoform of terminal deoxynucleotidyl transferase (TdtL) enters the nucleus and, rather than catalyzing N addition, modulates the catalytic activity of the short isoform.</title>
        <authorList>
            <person name="Benedict C.L."/>
            <person name="Gilfillan S."/>
            <person name="Kearney J.F."/>
        </authorList>
    </citation>
    <scope>NUCLEOTIDE SEQUENCE [MRNA] (ISOFORMS TDT-L AND TDT-S)</scope>
    <scope>FUNCTION</scope>
    <scope>TISSUE SPECIFICITY</scope>
    <source>
        <strain>C57BL/6J</strain>
        <tissue>Thymus</tissue>
    </source>
</reference>
<reference key="5">
    <citation type="journal article" date="2005" name="Science">
        <title>The transcriptional landscape of the mammalian genome.</title>
        <authorList>
            <person name="Carninci P."/>
            <person name="Kasukawa T."/>
            <person name="Katayama S."/>
            <person name="Gough J."/>
            <person name="Frith M.C."/>
            <person name="Maeda N."/>
            <person name="Oyama R."/>
            <person name="Ravasi T."/>
            <person name="Lenhard B."/>
            <person name="Wells C."/>
            <person name="Kodzius R."/>
            <person name="Shimokawa K."/>
            <person name="Bajic V.B."/>
            <person name="Brenner S.E."/>
            <person name="Batalov S."/>
            <person name="Forrest A.R."/>
            <person name="Zavolan M."/>
            <person name="Davis M.J."/>
            <person name="Wilming L.G."/>
            <person name="Aidinis V."/>
            <person name="Allen J.E."/>
            <person name="Ambesi-Impiombato A."/>
            <person name="Apweiler R."/>
            <person name="Aturaliya R.N."/>
            <person name="Bailey T.L."/>
            <person name="Bansal M."/>
            <person name="Baxter L."/>
            <person name="Beisel K.W."/>
            <person name="Bersano T."/>
            <person name="Bono H."/>
            <person name="Chalk A.M."/>
            <person name="Chiu K.P."/>
            <person name="Choudhary V."/>
            <person name="Christoffels A."/>
            <person name="Clutterbuck D.R."/>
            <person name="Crowe M.L."/>
            <person name="Dalla E."/>
            <person name="Dalrymple B.P."/>
            <person name="de Bono B."/>
            <person name="Della Gatta G."/>
            <person name="di Bernardo D."/>
            <person name="Down T."/>
            <person name="Engstrom P."/>
            <person name="Fagiolini M."/>
            <person name="Faulkner G."/>
            <person name="Fletcher C.F."/>
            <person name="Fukushima T."/>
            <person name="Furuno M."/>
            <person name="Futaki S."/>
            <person name="Gariboldi M."/>
            <person name="Georgii-Hemming P."/>
            <person name="Gingeras T.R."/>
            <person name="Gojobori T."/>
            <person name="Green R.E."/>
            <person name="Gustincich S."/>
            <person name="Harbers M."/>
            <person name="Hayashi Y."/>
            <person name="Hensch T.K."/>
            <person name="Hirokawa N."/>
            <person name="Hill D."/>
            <person name="Huminiecki L."/>
            <person name="Iacono M."/>
            <person name="Ikeo K."/>
            <person name="Iwama A."/>
            <person name="Ishikawa T."/>
            <person name="Jakt M."/>
            <person name="Kanapin A."/>
            <person name="Katoh M."/>
            <person name="Kawasawa Y."/>
            <person name="Kelso J."/>
            <person name="Kitamura H."/>
            <person name="Kitano H."/>
            <person name="Kollias G."/>
            <person name="Krishnan S.P."/>
            <person name="Kruger A."/>
            <person name="Kummerfeld S.K."/>
            <person name="Kurochkin I.V."/>
            <person name="Lareau L.F."/>
            <person name="Lazarevic D."/>
            <person name="Lipovich L."/>
            <person name="Liu J."/>
            <person name="Liuni S."/>
            <person name="McWilliam S."/>
            <person name="Madan Babu M."/>
            <person name="Madera M."/>
            <person name="Marchionni L."/>
            <person name="Matsuda H."/>
            <person name="Matsuzawa S."/>
            <person name="Miki H."/>
            <person name="Mignone F."/>
            <person name="Miyake S."/>
            <person name="Morris K."/>
            <person name="Mottagui-Tabar S."/>
            <person name="Mulder N."/>
            <person name="Nakano N."/>
            <person name="Nakauchi H."/>
            <person name="Ng P."/>
            <person name="Nilsson R."/>
            <person name="Nishiguchi S."/>
            <person name="Nishikawa S."/>
            <person name="Nori F."/>
            <person name="Ohara O."/>
            <person name="Okazaki Y."/>
            <person name="Orlando V."/>
            <person name="Pang K.C."/>
            <person name="Pavan W.J."/>
            <person name="Pavesi G."/>
            <person name="Pesole G."/>
            <person name="Petrovsky N."/>
            <person name="Piazza S."/>
            <person name="Reed J."/>
            <person name="Reid J.F."/>
            <person name="Ring B.Z."/>
            <person name="Ringwald M."/>
            <person name="Rost B."/>
            <person name="Ruan Y."/>
            <person name="Salzberg S.L."/>
            <person name="Sandelin A."/>
            <person name="Schneider C."/>
            <person name="Schoenbach C."/>
            <person name="Sekiguchi K."/>
            <person name="Semple C.A."/>
            <person name="Seno S."/>
            <person name="Sessa L."/>
            <person name="Sheng Y."/>
            <person name="Shibata Y."/>
            <person name="Shimada H."/>
            <person name="Shimada K."/>
            <person name="Silva D."/>
            <person name="Sinclair B."/>
            <person name="Sperling S."/>
            <person name="Stupka E."/>
            <person name="Sugiura K."/>
            <person name="Sultana R."/>
            <person name="Takenaka Y."/>
            <person name="Taki K."/>
            <person name="Tammoja K."/>
            <person name="Tan S.L."/>
            <person name="Tang S."/>
            <person name="Taylor M.S."/>
            <person name="Tegner J."/>
            <person name="Teichmann S.A."/>
            <person name="Ueda H.R."/>
            <person name="van Nimwegen E."/>
            <person name="Verardo R."/>
            <person name="Wei C.L."/>
            <person name="Yagi K."/>
            <person name="Yamanishi H."/>
            <person name="Zabarovsky E."/>
            <person name="Zhu S."/>
            <person name="Zimmer A."/>
            <person name="Hide W."/>
            <person name="Bult C."/>
            <person name="Grimmond S.M."/>
            <person name="Teasdale R.D."/>
            <person name="Liu E.T."/>
            <person name="Brusic V."/>
            <person name="Quackenbush J."/>
            <person name="Wahlestedt C."/>
            <person name="Mattick J.S."/>
            <person name="Hume D.A."/>
            <person name="Kai C."/>
            <person name="Sasaki D."/>
            <person name="Tomaru Y."/>
            <person name="Fukuda S."/>
            <person name="Kanamori-Katayama M."/>
            <person name="Suzuki M."/>
            <person name="Aoki J."/>
            <person name="Arakawa T."/>
            <person name="Iida J."/>
            <person name="Imamura K."/>
            <person name="Itoh M."/>
            <person name="Kato T."/>
            <person name="Kawaji H."/>
            <person name="Kawagashira N."/>
            <person name="Kawashima T."/>
            <person name="Kojima M."/>
            <person name="Kondo S."/>
            <person name="Konno H."/>
            <person name="Nakano K."/>
            <person name="Ninomiya N."/>
            <person name="Nishio T."/>
            <person name="Okada M."/>
            <person name="Plessy C."/>
            <person name="Shibata K."/>
            <person name="Shiraki T."/>
            <person name="Suzuki S."/>
            <person name="Tagami M."/>
            <person name="Waki K."/>
            <person name="Watahiki A."/>
            <person name="Okamura-Oho Y."/>
            <person name="Suzuki H."/>
            <person name="Kawai J."/>
            <person name="Hayashizaki Y."/>
        </authorList>
    </citation>
    <scope>NUCLEOTIDE SEQUENCE [LARGE SCALE MRNA] (ISOFORM TDT-L)</scope>
    <source>
        <strain>NOD</strain>
        <tissue>Thymus</tissue>
    </source>
</reference>
<reference key="6">
    <citation type="submission" date="2009-01" db="UniProtKB">
        <authorList>
            <person name="Lubec G."/>
            <person name="Sunyer B."/>
            <person name="Chen W.-Q."/>
        </authorList>
    </citation>
    <scope>PROTEIN SEQUENCE OF 388-393</scope>
    <scope>IDENTIFICATION BY MASS SPECTROMETRY</scope>
    <source>
        <strain>OF1</strain>
        <tissue>Hippocampus</tissue>
    </source>
</reference>
<reference key="7">
    <citation type="journal article" date="1995" name="EMBO J.">
        <title>The two isoforms of mouse terminal deoxynucleotidyl transferase differ in both the ability to add N regions and subcellular localization.</title>
        <authorList>
            <person name="Bentolila L.A."/>
            <person name="Fanton D'Andon M."/>
            <person name="Nguyen T.Q."/>
            <person name="Martinez O."/>
            <person name="Rougeon F."/>
            <person name="Doyen N."/>
        </authorList>
    </citation>
    <scope>FUNCTION</scope>
    <scope>SUBCELLULAR LOCATION</scope>
    <scope>TISSUE SPECIFICITY</scope>
    <scope>ALTERNATIVE SPLICING</scope>
</reference>
<reference key="8">
    <citation type="journal article" date="2000" name="J. Biol. Chem.">
        <title>Comparison of the two murine terminal deoxynucleotidyltransferase isoforms. A 20-amino acid insertion in the highly conserved carboxyl-terminal region modifies the thermosensitivity but not the catalytic activity.</title>
        <authorList>
            <person name="Boule J.-B."/>
            <person name="Rougeon F."/>
            <person name="Papanicolaou C."/>
        </authorList>
    </citation>
    <scope>FUNCTION</scope>
    <scope>ALTERNATIVE SPLICING</scope>
    <scope>BIOPHYSICOCHEMICAL PROPERTIES</scope>
</reference>
<reference key="9">
    <citation type="journal article" date="2000" name="J. Biol. Chem.">
        <authorList>
            <person name="Boule J.-B."/>
            <person name="Rougeon F."/>
            <person name="Papanicolaou C."/>
        </authorList>
    </citation>
    <scope>ERRATUM OF PUBMED:10878023</scope>
</reference>
<reference key="10">
    <citation type="journal article" date="2002" name="Nat. Immunol.">
        <title>Distinct and opposite diversifying activities of terminal transferase splice variants.</title>
        <authorList>
            <person name="Thai T.H."/>
            <person name="Purugganan M.M."/>
            <person name="Roth D.B."/>
            <person name="Kearney J.F."/>
        </authorList>
    </citation>
    <scope>FUNCTION</scope>
    <scope>TISSUE SPECIFICITY</scope>
    <scope>CHARACTERIZATION OF ISOFORMS TDT-L AND TDT-S</scope>
    <scope>MUTAGENESIS OF ASP-29; ASP-170 AND ASP-473</scope>
</reference>
<reference key="11">
    <citation type="journal article" date="2010" name="Cell">
        <title>A tissue-specific atlas of mouse protein phosphorylation and expression.</title>
        <authorList>
            <person name="Huttlin E.L."/>
            <person name="Jedrychowski M.P."/>
            <person name="Elias J.E."/>
            <person name="Goswami T."/>
            <person name="Rad R."/>
            <person name="Beausoleil S.A."/>
            <person name="Villen J."/>
            <person name="Haas W."/>
            <person name="Sowa M.E."/>
            <person name="Gygi S.P."/>
        </authorList>
    </citation>
    <scope>PHOSPHORYLATION [LARGE SCALE ANALYSIS] AT SER-134</scope>
    <scope>IDENTIFICATION BY MASS SPECTROMETRY [LARGE SCALE ANALYSIS]</scope>
    <source>
        <tissue>Lung</tissue>
    </source>
</reference>
<reference key="12">
    <citation type="journal article" date="2002" name="EMBO J.">
        <title>Crystal structures of a template-independent DNA polymerase: murine terminal deoxynucleotidyltransferase.</title>
        <authorList>
            <person name="Delarue M."/>
            <person name="Boule J.-B."/>
            <person name="Lescar J."/>
            <person name="Expert-Bezancon N."/>
            <person name="Jourdan N."/>
            <person name="Sukumar N."/>
            <person name="Rougeon F."/>
            <person name="Papanicolaou C."/>
        </authorList>
    </citation>
    <scope>X-RAY CRYSTALLOGRAPHY (2.35 ANGSTROMS) OF 130-510 (ISOFORM TDT-S) IN COMPLEXES WITH MAGNESIUM; COBALT AND ATP ANALOG</scope>
</reference>
<reference key="13">
    <citation type="journal article" date="2013" name="J. Med. Chem.">
        <title>New nucleotide-competitive non-nucleoside inhibitors of terminal deoxynucleotidyl transferase: discovery, characterization, and crystal structure in complex with the target.</title>
        <authorList>
            <person name="Costi R."/>
            <person name="Crucitti G.C."/>
            <person name="Pescatori L."/>
            <person name="Messore A."/>
            <person name="Scipione L."/>
            <person name="Tortorella S."/>
            <person name="Amoroso A."/>
            <person name="Crespan E."/>
            <person name="Campiglia P."/>
            <person name="Maresca B."/>
            <person name="Porta A."/>
            <person name="Granata I."/>
            <person name="Novellino E."/>
            <person name="Gouge J."/>
            <person name="Delarue M."/>
            <person name="Maga G."/>
            <person name="Di Santo R."/>
        </authorList>
    </citation>
    <scope>X-RAY CRYSTALLOGRAPHY (2.40 ANGSTROMS) OF 132-510 (ISOFORM TDT-S) IN COMPLEXES WITH SYNTHETIC INHIBITORS AND NUCLEOTIDE</scope>
    <scope>CATALYTIC ACTIVITY</scope>
</reference>
<reference key="14">
    <citation type="journal article" date="2013" name="J. Mol. Biol.">
        <title>Structures of intermediates along the catalytic cycle of terminal deoxynucleotidyltransferase: dynamical aspects of the two-metal ion mechanism.</title>
        <authorList>
            <person name="Gouge J."/>
            <person name="Rosario S."/>
            <person name="Romain F."/>
            <person name="Beguin P."/>
            <person name="Delarue M."/>
        </authorList>
    </citation>
    <scope>X-RAY CRYSTALLOGRAPHY (1.90 ANGSTROMS) OF 132-510 (ISOFORM TDT-S) IN COMPLEXES WITH ATP; CTP; TTP; NUCLEOTIDE; MAGNESIUM; MANGANESE AND ZINC</scope>
    <scope>FUNCTION</scope>
    <scope>CATALYTIC ACTIVITY</scope>
    <scope>COFACTOR</scope>
    <scope>MUTAGENESIS OF HIS-342; LEU-398; ASP-399; HIS-400; LYS-403; ASP-473 AND HIS-475</scope>
</reference>
<proteinExistence type="evidence at protein level"/>
<evidence type="ECO:0000250" key="1">
    <source>
        <dbReference type="UniProtKB" id="P04053"/>
    </source>
</evidence>
<evidence type="ECO:0000250" key="2">
    <source>
        <dbReference type="UniProtKB" id="P06526"/>
    </source>
</evidence>
<evidence type="ECO:0000255" key="3">
    <source>
        <dbReference type="PROSITE-ProRule" id="PRU00033"/>
    </source>
</evidence>
<evidence type="ECO:0000256" key="4">
    <source>
        <dbReference type="SAM" id="MobiDB-lite"/>
    </source>
</evidence>
<evidence type="ECO:0000269" key="5">
    <source>
    </source>
</evidence>
<evidence type="ECO:0000269" key="6">
    <source>
    </source>
</evidence>
<evidence type="ECO:0000269" key="7">
    <source>
    </source>
</evidence>
<evidence type="ECO:0000269" key="8">
    <source>
    </source>
</evidence>
<evidence type="ECO:0000269" key="9">
    <source>
    </source>
</evidence>
<evidence type="ECO:0000269" key="10">
    <source>
    </source>
</evidence>
<evidence type="ECO:0000269" key="11">
    <source>
    </source>
</evidence>
<evidence type="ECO:0000269" key="12">
    <source>
    </source>
</evidence>
<evidence type="ECO:0000303" key="13">
    <source>
    </source>
</evidence>
<evidence type="ECO:0000303" key="14">
    <source>
    </source>
</evidence>
<evidence type="ECO:0000303" key="15">
    <source>
    </source>
</evidence>
<evidence type="ECO:0000303" key="16">
    <source>
    </source>
</evidence>
<evidence type="ECO:0000305" key="17"/>
<evidence type="ECO:0007744" key="18">
    <source>
        <dbReference type="PDB" id="1JMS"/>
    </source>
</evidence>
<evidence type="ECO:0007744" key="19">
    <source>
        <dbReference type="PDB" id="4I2B"/>
    </source>
</evidence>
<evidence type="ECO:0007744" key="20">
    <source>
        <dbReference type="PDB" id="4I2C"/>
    </source>
</evidence>
<evidence type="ECO:0007744" key="21">
    <source>
        <dbReference type="PDB" id="4I2D"/>
    </source>
</evidence>
<evidence type="ECO:0007744" key="22">
    <source>
        <dbReference type="PDB" id="4I2E"/>
    </source>
</evidence>
<evidence type="ECO:0007744" key="23">
    <source>
    </source>
</evidence>
<evidence type="ECO:0007829" key="24">
    <source>
        <dbReference type="PDB" id="4I2A"/>
    </source>
</evidence>
<evidence type="ECO:0007829" key="25">
    <source>
        <dbReference type="PDB" id="4I2E"/>
    </source>
</evidence>
<evidence type="ECO:0007829" key="26">
    <source>
        <dbReference type="PDB" id="5D49"/>
    </source>
</evidence>
<feature type="chain" id="PRO_0000218792" description="DNA nucleotidylexotransferase">
    <location>
        <begin position="1"/>
        <end position="510"/>
    </location>
</feature>
<feature type="domain" description="BRCT" evidence="3">
    <location>
        <begin position="27"/>
        <end position="124"/>
    </location>
</feature>
<feature type="region of interest" description="Disordered" evidence="4">
    <location>
        <begin position="1"/>
        <end position="22"/>
    </location>
</feature>
<feature type="region of interest" description="Mediates interaction with DNTTIP2" evidence="1">
    <location>
        <begin position="151"/>
        <end position="510"/>
    </location>
</feature>
<feature type="region of interest" description="Involved in DNA binding" evidence="7 9">
    <location>
        <begin position="258"/>
        <end position="262"/>
    </location>
</feature>
<feature type="short sequence motif" description="Nuclear localization signal" evidence="2">
    <location>
        <begin position="11"/>
        <end position="17"/>
    </location>
</feature>
<feature type="binding site" evidence="17 19 20 21 22">
    <location>
        <begin position="333"/>
        <end position="338"/>
    </location>
    <ligand>
        <name>a 2'-deoxyribonucleoside 5'-triphosphate</name>
        <dbReference type="ChEBI" id="CHEBI:61560"/>
    </ligand>
</feature>
<feature type="binding site" evidence="17 19 20 21 22">
    <location>
        <begin position="342"/>
        <end position="345"/>
    </location>
    <ligand>
        <name>a 2'-deoxyribonucleoside 5'-triphosphate</name>
        <dbReference type="ChEBI" id="CHEBI:61560"/>
    </ligand>
</feature>
<feature type="binding site" evidence="17 18 19">
    <location>
        <position position="343"/>
    </location>
    <ligand>
        <name>Mg(2+)</name>
        <dbReference type="ChEBI" id="CHEBI:18420"/>
    </ligand>
</feature>
<feature type="binding site" evidence="17 18 19">
    <location>
        <position position="345"/>
    </location>
    <ligand>
        <name>Mg(2+)</name>
        <dbReference type="ChEBI" id="CHEBI:18420"/>
    </ligand>
</feature>
<feature type="binding site" evidence="17 18 19">
    <location>
        <position position="434"/>
    </location>
    <ligand>
        <name>Mg(2+)</name>
        <dbReference type="ChEBI" id="CHEBI:18420"/>
    </ligand>
</feature>
<feature type="binding site" evidence="17 19 20 21 22">
    <location>
        <begin position="449"/>
        <end position="450"/>
    </location>
    <ligand>
        <name>a 2'-deoxyribonucleoside 5'-triphosphate</name>
        <dbReference type="ChEBI" id="CHEBI:61560"/>
    </ligand>
</feature>
<feature type="modified residue" description="Phosphoserine" evidence="23">
    <location>
        <position position="134"/>
    </location>
</feature>
<feature type="splice variant" id="VSP_059967" description="In isoform TDT-L." evidence="13 14 15">
    <original>K</original>
    <variation>KGKTVTISPLDGKVSKLQKAL</variation>
    <location>
        <position position="482"/>
    </location>
</feature>
<feature type="mutagenesis site" description="Almost complete loss of exonuclease activity in TDT-L; when associated with A-170 and A-473. Decreased transferase activity in TDT-S; when associated with A-170 and A-473." evidence="8">
    <original>D</original>
    <variation>A</variation>
    <location>
        <position position="29"/>
    </location>
</feature>
<feature type="mutagenesis site" description="Almost complete loss of exonuclease activity in TDT-L; when associated with A-29 and A-473. Decreased transferase activity in TDT-S; when associated with A-29 and A-473." evidence="8">
    <original>D</original>
    <variation>A</variation>
    <location>
        <position position="170"/>
    </location>
</feature>
<feature type="mutagenesis site" description="Nearly abolishes enzyme activity." evidence="9">
    <original>H</original>
    <variation>A</variation>
    <location>
        <position position="342"/>
    </location>
</feature>
<feature type="mutagenesis site" description="Nearly abolishes enzyme activity." evidence="9">
    <original>L</original>
    <variation>A</variation>
    <location>
        <position position="398"/>
    </location>
</feature>
<feature type="mutagenesis site" description="Nearly abolishes enzyme activity." evidence="9">
    <original>D</original>
    <variation>A</variation>
    <location>
        <position position="399"/>
    </location>
</feature>
<feature type="mutagenesis site" description="Reduces enzyme activity." evidence="9">
    <original>H</original>
    <variation>A</variation>
    <location>
        <position position="400"/>
    </location>
</feature>
<feature type="mutagenesis site" description="Nearly abolishes enzyme activity." evidence="9">
    <original>K</original>
    <variation>A</variation>
    <location>
        <position position="403"/>
    </location>
</feature>
<feature type="mutagenesis site" description="Almost complete loss of exonuclease activity in TDT-L; when associated with A-29 and A-170. Decreased transferase activity in TDT-S; when associated with A-29 and A-170." evidence="8">
    <original>D</original>
    <variation>A</variation>
    <location>
        <position position="473"/>
    </location>
</feature>
<feature type="mutagenesis site" description="Nearly abolishes enzyme activity." evidence="9">
    <original>D</original>
    <variation>A</variation>
    <location>
        <position position="473"/>
    </location>
</feature>
<feature type="mutagenesis site" description="Nearly abolishes enzyme activity." evidence="9">
    <original>H</original>
    <variation>A</variation>
    <location>
        <position position="475"/>
    </location>
</feature>
<feature type="sequence conflict" description="In Ref. 2; CAA48634." evidence="17" ref="2">
    <original>T</original>
    <variation>M</variation>
    <location>
        <position position="26"/>
    </location>
</feature>
<feature type="sequence conflict" description="In Ref. 2; CAA48634." evidence="17" ref="2">
    <original>L</original>
    <variation>F</variation>
    <location>
        <position position="99"/>
    </location>
</feature>
<feature type="sequence conflict" description="In Ref. 1; CAA27735." evidence="17" ref="1">
    <original>R</original>
    <variation>G</variation>
    <location>
        <position position="193"/>
    </location>
</feature>
<feature type="sequence conflict" description="In Ref. 1; CAA27735." evidence="17" ref="1">
    <original>Q</original>
    <variation>K</variation>
    <location>
        <position position="287"/>
    </location>
</feature>
<feature type="sequence conflict" description="In Ref. 1; CAA27735." evidence="17" ref="1">
    <original>E</original>
    <variation>Q</variation>
    <location>
        <position position="309"/>
    </location>
</feature>
<feature type="sequence conflict" description="In Ref. 1; CAA27735." evidence="17" ref="1">
    <original>D</original>
    <variation>H</variation>
    <location>
        <position position="367"/>
    </location>
</feature>
<feature type="sequence conflict" description="In Ref. 1; CAA27735." evidence="17" ref="1">
    <original>DRRAF</original>
    <variation>ECAC</variation>
    <location>
        <begin position="441"/>
        <end position="445"/>
    </location>
</feature>
<feature type="helix" evidence="24">
    <location>
        <begin position="154"/>
        <end position="156"/>
    </location>
</feature>
<feature type="helix" evidence="24">
    <location>
        <begin position="166"/>
        <end position="181"/>
    </location>
</feature>
<feature type="helix" evidence="24">
    <location>
        <begin position="185"/>
        <end position="199"/>
    </location>
</feature>
<feature type="helix" evidence="24">
    <location>
        <begin position="208"/>
        <end position="211"/>
    </location>
</feature>
<feature type="helix" evidence="24">
    <location>
        <begin position="219"/>
        <end position="231"/>
    </location>
</feature>
<feature type="helix" evidence="24">
    <location>
        <begin position="235"/>
        <end position="242"/>
    </location>
</feature>
<feature type="helix" evidence="24">
    <location>
        <begin position="244"/>
        <end position="253"/>
    </location>
</feature>
<feature type="helix" evidence="24">
    <location>
        <begin position="260"/>
        <end position="268"/>
    </location>
</feature>
<feature type="helix" evidence="24">
    <location>
        <begin position="274"/>
        <end position="279"/>
    </location>
</feature>
<feature type="helix" evidence="24">
    <location>
        <begin position="287"/>
        <end position="294"/>
    </location>
</feature>
<feature type="helix" evidence="24">
    <location>
        <begin position="296"/>
        <end position="300"/>
    </location>
</feature>
<feature type="helix" evidence="24">
    <location>
        <begin position="305"/>
        <end position="322"/>
    </location>
</feature>
<feature type="strand" evidence="24">
    <location>
        <begin position="327"/>
        <end position="330"/>
    </location>
</feature>
<feature type="helix" evidence="24">
    <location>
        <begin position="332"/>
        <end position="335"/>
    </location>
</feature>
<feature type="strand" evidence="24">
    <location>
        <begin position="339"/>
        <end position="342"/>
    </location>
</feature>
<feature type="strand" evidence="24">
    <location>
        <begin position="344"/>
        <end position="349"/>
    </location>
</feature>
<feature type="helix" evidence="24">
    <location>
        <begin position="355"/>
        <end position="372"/>
    </location>
</feature>
<feature type="strand" evidence="24">
    <location>
        <begin position="375"/>
        <end position="381"/>
    </location>
</feature>
<feature type="helix" evidence="26">
    <location>
        <begin position="387"/>
        <end position="389"/>
    </location>
</feature>
<feature type="strand" evidence="24">
    <location>
        <begin position="394"/>
        <end position="396"/>
    </location>
</feature>
<feature type="strand" evidence="24">
    <location>
        <begin position="401"/>
        <end position="411"/>
    </location>
</feature>
<feature type="helix" evidence="24">
    <location>
        <begin position="412"/>
        <end position="414"/>
    </location>
</feature>
<feature type="strand" evidence="24">
    <location>
        <begin position="425"/>
        <end position="437"/>
    </location>
</feature>
<feature type="helix" evidence="24">
    <location>
        <begin position="440"/>
        <end position="442"/>
    </location>
</feature>
<feature type="helix" evidence="24">
    <location>
        <begin position="443"/>
        <end position="451"/>
    </location>
</feature>
<feature type="helix" evidence="24">
    <location>
        <begin position="454"/>
        <end position="468"/>
    </location>
</feature>
<feature type="strand" evidence="24">
    <location>
        <begin position="470"/>
        <end position="472"/>
    </location>
</feature>
<feature type="strand" evidence="24">
    <location>
        <begin position="477"/>
        <end position="479"/>
    </location>
</feature>
<feature type="turn" evidence="24">
    <location>
        <begin position="480"/>
        <end position="483"/>
    </location>
</feature>
<feature type="strand" evidence="25">
    <location>
        <begin position="484"/>
        <end position="486"/>
    </location>
</feature>
<feature type="helix" evidence="24">
    <location>
        <begin position="491"/>
        <end position="498"/>
    </location>
</feature>
<feature type="helix" evidence="24">
    <location>
        <begin position="505"/>
        <end position="507"/>
    </location>
</feature>
<gene>
    <name type="primary">Dntt</name>
    <name type="synonym">Tdt</name>
</gene>
<keyword id="KW-0002">3D-structure</keyword>
<keyword id="KW-0025">Alternative splicing</keyword>
<keyword id="KW-0963">Cytoplasm</keyword>
<keyword id="KW-0903">Direct protein sequencing</keyword>
<keyword id="KW-0378">Hydrolase</keyword>
<keyword id="KW-0460">Magnesium</keyword>
<keyword id="KW-0479">Metal-binding</keyword>
<keyword id="KW-0548">Nucleotidyltransferase</keyword>
<keyword id="KW-0539">Nucleus</keyword>
<keyword id="KW-0597">Phosphoprotein</keyword>
<keyword id="KW-1185">Reference proteome</keyword>
<keyword id="KW-0780">Terminal addition</keyword>
<keyword id="KW-0808">Transferase</keyword>
<sequence length="510" mass="58266">MDPLQAVHLGPRKKRPRQLGTPVASTPYDIRFRDLVLFILEKKMGTTRRAFLMELARRKGFRVENELSDSVTHIVAENNSGSDVLEWLQLQNIKASSELELLDISWLIECMGAGKPVEMMGRHQLVVNRNSSPSPVPGSQNVPAPAVKKISQYACQRRTTLNNYNQLFTDALDILAENDELRENEGSCLAFMRASSVLKSLPFPITSMKDTEGIPCLGDKVKSIIEGIIEDGESSEAKAVLNDERYKSFKLFTSVFGVGLKTAEKWFRMGFRTLSKIQSDKSLRFTQMQKAGFLYYEDLVSCVNRPEAEAVSMLVKEAVVTFLPDALVTMTGGFRRGKMTGHDVDFLITSPEATEDEEQQLLHKVTDFWKQQGLLLYCDILESTFEKFKQPSRKVDALDHFQKCFLILKLDHGRVHSEKSGQQEGKGWKAIRVDLVMCPYDRRAFALLGWTGSRQFERDLRRYATHERKMMLDNHALYDRTKRVFLEAESEEEIFAHLGLDYIEPWERNA</sequence>
<comment type="function">
    <molecule>Isoform TDT-S</molecule>
    <text evidence="6 8 9 11 12">Transferase that catalyzes the nontemplated addition of nucleoside triphosphate to coding ends during V(D)J recombination (N addition). Involved in the generation of diversity in the antigen-binding region of immunoglobulin heavy and light chains and T-cell receptors during B- and T-cell development. Does not act on double-stranded DNA with blunt ends.</text>
</comment>
<comment type="function">
    <molecule>Isoform TDT-L</molecule>
    <text evidence="6 8 11">3'-to-5' DNA exonuclease. Involved in the generation of diversity in the antigen-binding region of immunoglobulin heavy and light chains and T-cell receptors during B- and T-cell development. Acts on single-stranded and double-stranded DNA with 3' or 5' extensions, but not on double-stranded DNA with blunt ends. Attenuates not only isoform TDT-S-catalyzed N addition, but also P (palindromic) addition in coding joins (PubMed:11938351). Lacks terminal transferase activity (PubMed:11136823, PubMed:7556063).</text>
</comment>
<comment type="catalytic activity">
    <reaction evidence="9 10">
        <text>DNA(n) + a 2'-deoxyribonucleoside 5'-triphosphate = DNA(n+1) + diphosphate</text>
        <dbReference type="Rhea" id="RHEA:22508"/>
        <dbReference type="Rhea" id="RHEA-COMP:17339"/>
        <dbReference type="Rhea" id="RHEA-COMP:17340"/>
        <dbReference type="ChEBI" id="CHEBI:33019"/>
        <dbReference type="ChEBI" id="CHEBI:61560"/>
        <dbReference type="ChEBI" id="CHEBI:173112"/>
        <dbReference type="EC" id="2.7.7.31"/>
    </reaction>
</comment>
<comment type="cofactor">
    <cofactor evidence="9">
        <name>Mg(2+)</name>
        <dbReference type="ChEBI" id="CHEBI:18420"/>
    </cofactor>
    <text evidence="9 17">Can also utilize other divalent cations, such as Mn(2+) and Co(2+) (in vitro).</text>
</comment>
<comment type="biophysicochemical properties">
    <kinetics>
        <KM evidence="5">300 uM for dATP (at 35 degrees Celsius)</KM>
        <text evidence="5">In assays with isoform TDT-S.</text>
    </kinetics>
</comment>
<comment type="subunit">
    <text evidence="1">Interacts with PRP19 and DNTTIP1. Forms a ternary complex with DNTTIP2 and core histone. Released from this complex by PCNA. Interacts with TRERF1.</text>
</comment>
<comment type="subcellular location">
    <molecule>Isoform TDT-S</molecule>
    <subcellularLocation>
        <location evidence="11">Nucleus</location>
    </subcellularLocation>
</comment>
<comment type="subcellular location">
    <molecule>Isoform TDT-L</molecule>
    <subcellularLocation>
        <location evidence="6">Nucleus</location>
    </subcellularLocation>
    <subcellularLocation>
        <location evidence="11">Cytoplasm</location>
    </subcellularLocation>
    <text evidence="6 11">The subcellular location is controversial. Detected in the nucleus (PubMed:11136823). Found mainly in the cytoplasm (PubMed:7556063).</text>
</comment>
<comment type="alternative products">
    <event type="alternative splicing"/>
    <isoform>
        <id>P09838-2</id>
        <name>TDT-S</name>
        <name>TDT-Small</name>
        <name evidence="16">TdtS</name>
        <sequence type="displayed"/>
    </isoform>
    <isoform>
        <id>P09838-1</id>
        <name>TDT-L</name>
        <name>TDT-Large</name>
        <name evidence="16">TdtL</name>
        <sequence type="described" ref="VSP_059967"/>
    </isoform>
</comment>
<comment type="tissue specificity">
    <text evidence="6 8 11 12">Isoform TDT-L: Expressed in the thymus, and, at lower levels, in the bone marrow (PubMed:11136823, PubMed:7556063, PubMed:8464703). Detected in both cycling and noncycling pro-B and pre-B cells (at protein level) (PubMed:11938351). Isoform TDT-S: Expressed in both cycling and noncycling pro-B, but not pre-B, cells (at protein level) (PubMed:11938351). Not detected in mature peripheral or germinal center B cells (PubMed:11938351).</text>
</comment>
<comment type="miscellaneous">
    <molecule>Isoform TDT-S</molecule>
    <text evidence="6 8 11 12">Major form in the thymus and the bone marrow (PubMed:11136823, PubMed:8464703). Catalyzes the nontemplated addition of nucleoside triphosphate to coding ends during V(D)J recombination (PubMed:23856622). May have a longer half-life than isoform TDT-L (PubMed:7556063).</text>
</comment>
<comment type="miscellaneous">
    <molecule>Isoform TDT-L</molecule>
    <text evidence="5 8 11">Exhibits 3'-to-5' DNA exonuclease activity (EC=3.1.11.-) (PubMed:23856622). May have a shorter half-life than isoform TDT-S (PubMed:10878023, PubMed:7556063).</text>
</comment>
<comment type="similarity">
    <text evidence="17">Belongs to the DNA polymerase type-X family.</text>
</comment>